<comment type="function">
    <text evidence="1">Binds directly to 23S rRNA. The L1 stalk is quite mobile in the ribosome, and is involved in E site tRNA release.</text>
</comment>
<comment type="function">
    <text evidence="1">Protein L1 is also a translational repressor protein, it controls the translation of the L11 operon by binding to its mRNA.</text>
</comment>
<comment type="subunit">
    <text evidence="1">Part of the 50S ribosomal subunit.</text>
</comment>
<comment type="similarity">
    <text evidence="1">Belongs to the universal ribosomal protein uL1 family.</text>
</comment>
<reference key="1">
    <citation type="submission" date="2005-08" db="EMBL/GenBank/DDBJ databases">
        <title>Complete sequence of chromosome 1 of Nitrosospira multiformis ATCC 25196.</title>
        <authorList>
            <person name="Copeland A."/>
            <person name="Lucas S."/>
            <person name="Lapidus A."/>
            <person name="Barry K."/>
            <person name="Detter J.C."/>
            <person name="Glavina T."/>
            <person name="Hammon N."/>
            <person name="Israni S."/>
            <person name="Pitluck S."/>
            <person name="Chain P."/>
            <person name="Malfatti S."/>
            <person name="Shin M."/>
            <person name="Vergez L."/>
            <person name="Schmutz J."/>
            <person name="Larimer F."/>
            <person name="Land M."/>
            <person name="Hauser L."/>
            <person name="Kyrpides N."/>
            <person name="Lykidis A."/>
            <person name="Richardson P."/>
        </authorList>
    </citation>
    <scope>NUCLEOTIDE SEQUENCE [LARGE SCALE GENOMIC DNA]</scope>
    <source>
        <strain>ATCC 25196 / NCIMB 11849 / C 71</strain>
    </source>
</reference>
<name>RL1_NITMU</name>
<accession>Q2YB08</accession>
<evidence type="ECO:0000255" key="1">
    <source>
        <dbReference type="HAMAP-Rule" id="MF_01318"/>
    </source>
</evidence>
<evidence type="ECO:0000305" key="2"/>
<keyword id="KW-1185">Reference proteome</keyword>
<keyword id="KW-0678">Repressor</keyword>
<keyword id="KW-0687">Ribonucleoprotein</keyword>
<keyword id="KW-0689">Ribosomal protein</keyword>
<keyword id="KW-0694">RNA-binding</keyword>
<keyword id="KW-0699">rRNA-binding</keyword>
<keyword id="KW-0810">Translation regulation</keyword>
<keyword id="KW-0820">tRNA-binding</keyword>
<gene>
    <name evidence="1" type="primary">rplA</name>
    <name type="ordered locus">Nmul_A0756</name>
</gene>
<protein>
    <recommendedName>
        <fullName evidence="1">Large ribosomal subunit protein uL1</fullName>
    </recommendedName>
    <alternativeName>
        <fullName evidence="2">50S ribosomal protein L1</fullName>
    </alternativeName>
</protein>
<organism>
    <name type="scientific">Nitrosospira multiformis (strain ATCC 25196 / NCIMB 11849 / C 71)</name>
    <dbReference type="NCBI Taxonomy" id="323848"/>
    <lineage>
        <taxon>Bacteria</taxon>
        <taxon>Pseudomonadati</taxon>
        <taxon>Pseudomonadota</taxon>
        <taxon>Betaproteobacteria</taxon>
        <taxon>Nitrosomonadales</taxon>
        <taxon>Nitrosomonadaceae</taxon>
        <taxon>Nitrosospira</taxon>
    </lineage>
</organism>
<sequence length="230" mass="24214">MARLSKRLKAISEKVDRTKYYPLQDALNLVRETAIAKFDESIDVAVNLGIDAKKSDQAVRGSVVLPAGTGKTVRVAVFAQGDKAREAAAAGADIVGFEDLAEQIKAGNIEFDVAIASPDAMRVVGQLGQILGPRGLMPNPKVGTVTPDVAGAVKNAKAGQVQYRADKGGIVQCTIGRASFTVDALTQNMMALIDALNKSKPAASKGIYLRKISVSSTMGIGVRVDQTSMR</sequence>
<feature type="chain" id="PRO_0000230620" description="Large ribosomal subunit protein uL1">
    <location>
        <begin position="1"/>
        <end position="230"/>
    </location>
</feature>
<dbReference type="EMBL" id="CP000103">
    <property type="protein sequence ID" value="ABB74063.1"/>
    <property type="molecule type" value="Genomic_DNA"/>
</dbReference>
<dbReference type="RefSeq" id="WP_011380113.1">
    <property type="nucleotide sequence ID" value="NC_007614.1"/>
</dbReference>
<dbReference type="SMR" id="Q2YB08"/>
<dbReference type="STRING" id="323848.Nmul_A0756"/>
<dbReference type="KEGG" id="nmu:Nmul_A0756"/>
<dbReference type="eggNOG" id="COG0081">
    <property type="taxonomic scope" value="Bacteria"/>
</dbReference>
<dbReference type="HOGENOM" id="CLU_062853_0_0_4"/>
<dbReference type="OrthoDB" id="9803740at2"/>
<dbReference type="Proteomes" id="UP000002718">
    <property type="component" value="Chromosome"/>
</dbReference>
<dbReference type="GO" id="GO:0022625">
    <property type="term" value="C:cytosolic large ribosomal subunit"/>
    <property type="evidence" value="ECO:0007669"/>
    <property type="project" value="TreeGrafter"/>
</dbReference>
<dbReference type="GO" id="GO:0019843">
    <property type="term" value="F:rRNA binding"/>
    <property type="evidence" value="ECO:0007669"/>
    <property type="project" value="UniProtKB-UniRule"/>
</dbReference>
<dbReference type="GO" id="GO:0003735">
    <property type="term" value="F:structural constituent of ribosome"/>
    <property type="evidence" value="ECO:0007669"/>
    <property type="project" value="InterPro"/>
</dbReference>
<dbReference type="GO" id="GO:0000049">
    <property type="term" value="F:tRNA binding"/>
    <property type="evidence" value="ECO:0007669"/>
    <property type="project" value="UniProtKB-KW"/>
</dbReference>
<dbReference type="GO" id="GO:0006417">
    <property type="term" value="P:regulation of translation"/>
    <property type="evidence" value="ECO:0007669"/>
    <property type="project" value="UniProtKB-KW"/>
</dbReference>
<dbReference type="GO" id="GO:0006412">
    <property type="term" value="P:translation"/>
    <property type="evidence" value="ECO:0007669"/>
    <property type="project" value="UniProtKB-UniRule"/>
</dbReference>
<dbReference type="CDD" id="cd00403">
    <property type="entry name" value="Ribosomal_L1"/>
    <property type="match status" value="1"/>
</dbReference>
<dbReference type="FunFam" id="3.40.50.790:FF:000001">
    <property type="entry name" value="50S ribosomal protein L1"/>
    <property type="match status" value="1"/>
</dbReference>
<dbReference type="Gene3D" id="3.30.190.20">
    <property type="match status" value="1"/>
</dbReference>
<dbReference type="Gene3D" id="3.40.50.790">
    <property type="match status" value="1"/>
</dbReference>
<dbReference type="HAMAP" id="MF_01318_B">
    <property type="entry name" value="Ribosomal_uL1_B"/>
    <property type="match status" value="1"/>
</dbReference>
<dbReference type="InterPro" id="IPR005878">
    <property type="entry name" value="Ribosom_uL1_bac-type"/>
</dbReference>
<dbReference type="InterPro" id="IPR002143">
    <property type="entry name" value="Ribosomal_uL1"/>
</dbReference>
<dbReference type="InterPro" id="IPR023674">
    <property type="entry name" value="Ribosomal_uL1-like"/>
</dbReference>
<dbReference type="InterPro" id="IPR028364">
    <property type="entry name" value="Ribosomal_uL1/biogenesis"/>
</dbReference>
<dbReference type="InterPro" id="IPR016095">
    <property type="entry name" value="Ribosomal_uL1_3-a/b-sand"/>
</dbReference>
<dbReference type="InterPro" id="IPR023673">
    <property type="entry name" value="Ribosomal_uL1_CS"/>
</dbReference>
<dbReference type="NCBIfam" id="TIGR01169">
    <property type="entry name" value="rplA_bact"/>
    <property type="match status" value="1"/>
</dbReference>
<dbReference type="PANTHER" id="PTHR36427">
    <property type="entry name" value="54S RIBOSOMAL PROTEIN L1, MITOCHONDRIAL"/>
    <property type="match status" value="1"/>
</dbReference>
<dbReference type="PANTHER" id="PTHR36427:SF3">
    <property type="entry name" value="LARGE RIBOSOMAL SUBUNIT PROTEIN UL1M"/>
    <property type="match status" value="1"/>
</dbReference>
<dbReference type="Pfam" id="PF00687">
    <property type="entry name" value="Ribosomal_L1"/>
    <property type="match status" value="1"/>
</dbReference>
<dbReference type="PIRSF" id="PIRSF002155">
    <property type="entry name" value="Ribosomal_L1"/>
    <property type="match status" value="1"/>
</dbReference>
<dbReference type="SUPFAM" id="SSF56808">
    <property type="entry name" value="Ribosomal protein L1"/>
    <property type="match status" value="1"/>
</dbReference>
<dbReference type="PROSITE" id="PS01199">
    <property type="entry name" value="RIBOSOMAL_L1"/>
    <property type="match status" value="1"/>
</dbReference>
<proteinExistence type="inferred from homology"/>